<evidence type="ECO:0000255" key="1">
    <source>
        <dbReference type="HAMAP-Rule" id="MF_00255"/>
    </source>
</evidence>
<comment type="catalytic activity">
    <reaction evidence="1">
        <text>tRNA(Gly) + glycine + ATP = glycyl-tRNA(Gly) + AMP + diphosphate</text>
        <dbReference type="Rhea" id="RHEA:16013"/>
        <dbReference type="Rhea" id="RHEA-COMP:9664"/>
        <dbReference type="Rhea" id="RHEA-COMP:9683"/>
        <dbReference type="ChEBI" id="CHEBI:30616"/>
        <dbReference type="ChEBI" id="CHEBI:33019"/>
        <dbReference type="ChEBI" id="CHEBI:57305"/>
        <dbReference type="ChEBI" id="CHEBI:78442"/>
        <dbReference type="ChEBI" id="CHEBI:78522"/>
        <dbReference type="ChEBI" id="CHEBI:456215"/>
        <dbReference type="EC" id="6.1.1.14"/>
    </reaction>
</comment>
<comment type="subunit">
    <text evidence="1">Tetramer of two alpha and two beta subunits.</text>
</comment>
<comment type="subcellular location">
    <subcellularLocation>
        <location evidence="1">Cytoplasm</location>
    </subcellularLocation>
</comment>
<comment type="similarity">
    <text evidence="1">Belongs to the class-II aminoacyl-tRNA synthetase family.</text>
</comment>
<reference key="1">
    <citation type="journal article" date="2009" name="PLoS Genet.">
        <title>Organised genome dynamics in the Escherichia coli species results in highly diverse adaptive paths.</title>
        <authorList>
            <person name="Touchon M."/>
            <person name="Hoede C."/>
            <person name="Tenaillon O."/>
            <person name="Barbe V."/>
            <person name="Baeriswyl S."/>
            <person name="Bidet P."/>
            <person name="Bingen E."/>
            <person name="Bonacorsi S."/>
            <person name="Bouchier C."/>
            <person name="Bouvet O."/>
            <person name="Calteau A."/>
            <person name="Chiapello H."/>
            <person name="Clermont O."/>
            <person name="Cruveiller S."/>
            <person name="Danchin A."/>
            <person name="Diard M."/>
            <person name="Dossat C."/>
            <person name="Karoui M.E."/>
            <person name="Frapy E."/>
            <person name="Garry L."/>
            <person name="Ghigo J.M."/>
            <person name="Gilles A.M."/>
            <person name="Johnson J."/>
            <person name="Le Bouguenec C."/>
            <person name="Lescat M."/>
            <person name="Mangenot S."/>
            <person name="Martinez-Jehanne V."/>
            <person name="Matic I."/>
            <person name="Nassif X."/>
            <person name="Oztas S."/>
            <person name="Petit M.A."/>
            <person name="Pichon C."/>
            <person name="Rouy Z."/>
            <person name="Ruf C.S."/>
            <person name="Schneider D."/>
            <person name="Tourret J."/>
            <person name="Vacherie B."/>
            <person name="Vallenet D."/>
            <person name="Medigue C."/>
            <person name="Rocha E.P.C."/>
            <person name="Denamur E."/>
        </authorList>
    </citation>
    <scope>NUCLEOTIDE SEQUENCE [LARGE SCALE GENOMIC DNA]</scope>
    <source>
        <strain>ATCC 35469 / DSM 13698 / BCRC 15582 / CCUG 18766 / IAM 14443 / JCM 21226 / LMG 7866 / NBRC 102419 / NCTC 12128 / CDC 0568-73</strain>
    </source>
</reference>
<keyword id="KW-0030">Aminoacyl-tRNA synthetase</keyword>
<keyword id="KW-0067">ATP-binding</keyword>
<keyword id="KW-0963">Cytoplasm</keyword>
<keyword id="KW-0436">Ligase</keyword>
<keyword id="KW-0547">Nucleotide-binding</keyword>
<keyword id="KW-0648">Protein biosynthesis</keyword>
<sequence length="689" mass="76799">MSEKTFLVEIGTEELPPKALRSLAESFAANFTAELDNAGLAHGTVQWFAAPRRLALKVANLAEAQPDREIEKRGPAIAQAFDAEGKPSKAAEGWARGCGITVDQAERLTTDKGEWLLYRAHVKGESTEALLPNMVATSLAKLPIPKLMRWGASDVHFVRPVHTVTLLLGDKVIPATILGIQSDRVIRGHRFMGEPEFTIDNADQYPEILRERGKVIADYEERKAKIKADAEEAARKIGGNADLSESLLEEVASLVEWPVVLTAKFEEKFLAVPSEALVYTMKGDQKYFPVYANDGKLLPNFIFVANIESKDPQQIISGNEKVVRPRLADAEFFFNTDRKKRLEDNLPRLQTVLFQQQLGTLRDKTDRIQALAGWIAEQIGADVNHATRAGLLSKCDLMTNMVFEFTDTQGVMGMHYARHDGEAEDVAVALNEQYQPRFAGDDLPSNPVACALAIADKMDTLAGIFGIGQHPKGDKDPFALRRAALGVLRIIVEKNLNLDLQTLTEEAVRLYGDKLTNANVVDDVIDFMLGRFRAWYQDEGYTVDTIQAVLARRPTRPADFDARMKAVSHFRTLDAAAALAAANKRVSNILAKSDEVLSDRVNASTLKEPEEIKLAMQVVVLRDKLEPYFAEGRYQDALVELAELREPVDAFFDKVMVMVDDKELRINRLTMLEKLRELFLRVADISLLQ</sequence>
<protein>
    <recommendedName>
        <fullName evidence="1">Glycine--tRNA ligase beta subunit</fullName>
        <ecNumber evidence="1">6.1.1.14</ecNumber>
    </recommendedName>
    <alternativeName>
        <fullName evidence="1">Glycyl-tRNA synthetase beta subunit</fullName>
        <shortName evidence="1">GlyRS</shortName>
    </alternativeName>
</protein>
<name>SYGB_ESCF3</name>
<proteinExistence type="inferred from homology"/>
<gene>
    <name evidence="1" type="primary">glyS</name>
    <name type="ordered locus">EFER_3560</name>
</gene>
<feature type="chain" id="PRO_1000197200" description="Glycine--tRNA ligase beta subunit">
    <location>
        <begin position="1"/>
        <end position="689"/>
    </location>
</feature>
<organism>
    <name type="scientific">Escherichia fergusonii (strain ATCC 35469 / DSM 13698 / CCUG 18766 / IAM 14443 / JCM 21226 / LMG 7866 / NBRC 102419 / NCTC 12128 / CDC 0568-73)</name>
    <dbReference type="NCBI Taxonomy" id="585054"/>
    <lineage>
        <taxon>Bacteria</taxon>
        <taxon>Pseudomonadati</taxon>
        <taxon>Pseudomonadota</taxon>
        <taxon>Gammaproteobacteria</taxon>
        <taxon>Enterobacterales</taxon>
        <taxon>Enterobacteriaceae</taxon>
        <taxon>Escherichia</taxon>
    </lineage>
</organism>
<accession>B7LTH3</accession>
<dbReference type="EC" id="6.1.1.14" evidence="1"/>
<dbReference type="EMBL" id="CU928158">
    <property type="protein sequence ID" value="CAQ91032.1"/>
    <property type="molecule type" value="Genomic_DNA"/>
</dbReference>
<dbReference type="RefSeq" id="WP_001291786.1">
    <property type="nucleotide sequence ID" value="NC_011740.1"/>
</dbReference>
<dbReference type="SMR" id="B7LTH3"/>
<dbReference type="GeneID" id="75059834"/>
<dbReference type="KEGG" id="efe:EFER_3560"/>
<dbReference type="HOGENOM" id="CLU_007220_2_2_6"/>
<dbReference type="OrthoDB" id="9775440at2"/>
<dbReference type="Proteomes" id="UP000000745">
    <property type="component" value="Chromosome"/>
</dbReference>
<dbReference type="GO" id="GO:0005829">
    <property type="term" value="C:cytosol"/>
    <property type="evidence" value="ECO:0007669"/>
    <property type="project" value="TreeGrafter"/>
</dbReference>
<dbReference type="GO" id="GO:0004814">
    <property type="term" value="F:arginine-tRNA ligase activity"/>
    <property type="evidence" value="ECO:0007669"/>
    <property type="project" value="InterPro"/>
</dbReference>
<dbReference type="GO" id="GO:0005524">
    <property type="term" value="F:ATP binding"/>
    <property type="evidence" value="ECO:0007669"/>
    <property type="project" value="UniProtKB-UniRule"/>
</dbReference>
<dbReference type="GO" id="GO:0004820">
    <property type="term" value="F:glycine-tRNA ligase activity"/>
    <property type="evidence" value="ECO:0007669"/>
    <property type="project" value="UniProtKB-UniRule"/>
</dbReference>
<dbReference type="GO" id="GO:0006420">
    <property type="term" value="P:arginyl-tRNA aminoacylation"/>
    <property type="evidence" value="ECO:0007669"/>
    <property type="project" value="InterPro"/>
</dbReference>
<dbReference type="GO" id="GO:0006426">
    <property type="term" value="P:glycyl-tRNA aminoacylation"/>
    <property type="evidence" value="ECO:0007669"/>
    <property type="project" value="UniProtKB-UniRule"/>
</dbReference>
<dbReference type="HAMAP" id="MF_00255">
    <property type="entry name" value="Gly_tRNA_synth_beta"/>
    <property type="match status" value="1"/>
</dbReference>
<dbReference type="InterPro" id="IPR008909">
    <property type="entry name" value="DALR_anticod-bd"/>
</dbReference>
<dbReference type="InterPro" id="IPR015944">
    <property type="entry name" value="Gly-tRNA-synth_bsu"/>
</dbReference>
<dbReference type="InterPro" id="IPR006194">
    <property type="entry name" value="Gly-tRNA-synth_heterodimer"/>
</dbReference>
<dbReference type="NCBIfam" id="TIGR00211">
    <property type="entry name" value="glyS"/>
    <property type="match status" value="1"/>
</dbReference>
<dbReference type="PANTHER" id="PTHR30075:SF2">
    <property type="entry name" value="GLYCINE--TRNA LIGASE, CHLOROPLASTIC_MITOCHONDRIAL 2"/>
    <property type="match status" value="1"/>
</dbReference>
<dbReference type="PANTHER" id="PTHR30075">
    <property type="entry name" value="GLYCYL-TRNA SYNTHETASE"/>
    <property type="match status" value="1"/>
</dbReference>
<dbReference type="Pfam" id="PF05746">
    <property type="entry name" value="DALR_1"/>
    <property type="match status" value="1"/>
</dbReference>
<dbReference type="Pfam" id="PF02092">
    <property type="entry name" value="tRNA_synt_2f"/>
    <property type="match status" value="1"/>
</dbReference>
<dbReference type="PRINTS" id="PR01045">
    <property type="entry name" value="TRNASYNTHGB"/>
</dbReference>
<dbReference type="SUPFAM" id="SSF109604">
    <property type="entry name" value="HD-domain/PDEase-like"/>
    <property type="match status" value="1"/>
</dbReference>
<dbReference type="PROSITE" id="PS50861">
    <property type="entry name" value="AA_TRNA_LIGASE_II_GLYAB"/>
    <property type="match status" value="1"/>
</dbReference>